<gene>
    <name evidence="1" type="primary">pyrD</name>
    <name type="ordered locus">SUN_0811</name>
</gene>
<name>PYRD_SULNB</name>
<proteinExistence type="inferred from homology"/>
<comment type="function">
    <text evidence="1">Catalyzes the conversion of dihydroorotate to orotate with quinone as electron acceptor.</text>
</comment>
<comment type="catalytic activity">
    <reaction evidence="1">
        <text>(S)-dihydroorotate + a quinone = orotate + a quinol</text>
        <dbReference type="Rhea" id="RHEA:30187"/>
        <dbReference type="ChEBI" id="CHEBI:24646"/>
        <dbReference type="ChEBI" id="CHEBI:30839"/>
        <dbReference type="ChEBI" id="CHEBI:30864"/>
        <dbReference type="ChEBI" id="CHEBI:132124"/>
        <dbReference type="EC" id="1.3.5.2"/>
    </reaction>
</comment>
<comment type="cofactor">
    <cofactor evidence="1">
        <name>FMN</name>
        <dbReference type="ChEBI" id="CHEBI:58210"/>
    </cofactor>
    <text evidence="1">Binds 1 FMN per subunit.</text>
</comment>
<comment type="pathway">
    <text evidence="1">Pyrimidine metabolism; UMP biosynthesis via de novo pathway; orotate from (S)-dihydroorotate (quinone route): step 1/1.</text>
</comment>
<comment type="subunit">
    <text evidence="1">Monomer.</text>
</comment>
<comment type="subcellular location">
    <subcellularLocation>
        <location evidence="1">Cell membrane</location>
        <topology evidence="1">Peripheral membrane protein</topology>
    </subcellularLocation>
</comment>
<comment type="similarity">
    <text evidence="1">Belongs to the dihydroorotate dehydrogenase family. Type 2 subfamily.</text>
</comment>
<accession>A6Q8G0</accession>
<sequence length="354" mass="39282">MPFFSYDTVKKILFNFDPETAHTLAGIGLRALPCCPPLLHFITKQYFVTDPMIEQEFFGRTFKNPVGLGAGFDKNGQYITSMPALGFGFTEIGTVTPKPQPGNPKPRLFRLLEDRSIQNAMGFNNRGMGYMLEQLNKLYFFDYPIGINIGKNKVTSEEKALEDYETLFHAFKDYGDYIVINISSPNTPGLRDLQNEQFIKDIFAMAKRITEQPVLLKIAPDMTHEDAIALCNTAVDAGAAGIIATNTTIDYSLTPHAKDFGGISGALLTEKSYQLFKAIGKELYGKTLLISVGGIDSAEEAYRRIKAGASLVQVYSMLIYKGPALIREINEGLIKLLKKDGYTHISEAIGADWK</sequence>
<organism>
    <name type="scientific">Sulfurovum sp. (strain NBC37-1)</name>
    <dbReference type="NCBI Taxonomy" id="387093"/>
    <lineage>
        <taxon>Bacteria</taxon>
        <taxon>Pseudomonadati</taxon>
        <taxon>Campylobacterota</taxon>
        <taxon>Epsilonproteobacteria</taxon>
        <taxon>Campylobacterales</taxon>
        <taxon>Sulfurovaceae</taxon>
        <taxon>Sulfurovum</taxon>
    </lineage>
</organism>
<keyword id="KW-1003">Cell membrane</keyword>
<keyword id="KW-0285">Flavoprotein</keyword>
<keyword id="KW-0288">FMN</keyword>
<keyword id="KW-0472">Membrane</keyword>
<keyword id="KW-0560">Oxidoreductase</keyword>
<keyword id="KW-0665">Pyrimidine biosynthesis</keyword>
<feature type="chain" id="PRO_0000336494" description="Dihydroorotate dehydrogenase (quinone)">
    <location>
        <begin position="1"/>
        <end position="354"/>
    </location>
</feature>
<feature type="active site" description="Nucleophile" evidence="1">
    <location>
        <position position="184"/>
    </location>
</feature>
<feature type="binding site" evidence="1">
    <location>
        <begin position="70"/>
        <end position="74"/>
    </location>
    <ligand>
        <name>FMN</name>
        <dbReference type="ChEBI" id="CHEBI:58210"/>
    </ligand>
</feature>
<feature type="binding site" evidence="1">
    <location>
        <position position="74"/>
    </location>
    <ligand>
        <name>substrate</name>
    </ligand>
</feature>
<feature type="binding site" evidence="1">
    <location>
        <position position="94"/>
    </location>
    <ligand>
        <name>FMN</name>
        <dbReference type="ChEBI" id="CHEBI:58210"/>
    </ligand>
</feature>
<feature type="binding site" evidence="1">
    <location>
        <begin position="119"/>
        <end position="123"/>
    </location>
    <ligand>
        <name>substrate</name>
    </ligand>
</feature>
<feature type="binding site" evidence="1">
    <location>
        <position position="148"/>
    </location>
    <ligand>
        <name>FMN</name>
        <dbReference type="ChEBI" id="CHEBI:58210"/>
    </ligand>
</feature>
<feature type="binding site" evidence="1">
    <location>
        <position position="181"/>
    </location>
    <ligand>
        <name>FMN</name>
        <dbReference type="ChEBI" id="CHEBI:58210"/>
    </ligand>
</feature>
<feature type="binding site" evidence="1">
    <location>
        <position position="181"/>
    </location>
    <ligand>
        <name>substrate</name>
    </ligand>
</feature>
<feature type="binding site" evidence="1">
    <location>
        <position position="186"/>
    </location>
    <ligand>
        <name>substrate</name>
    </ligand>
</feature>
<feature type="binding site" evidence="1">
    <location>
        <position position="217"/>
    </location>
    <ligand>
        <name>FMN</name>
        <dbReference type="ChEBI" id="CHEBI:58210"/>
    </ligand>
</feature>
<feature type="binding site" evidence="1">
    <location>
        <position position="245"/>
    </location>
    <ligand>
        <name>FMN</name>
        <dbReference type="ChEBI" id="CHEBI:58210"/>
    </ligand>
</feature>
<feature type="binding site" evidence="1">
    <location>
        <begin position="246"/>
        <end position="247"/>
    </location>
    <ligand>
        <name>substrate</name>
    </ligand>
</feature>
<feature type="binding site" evidence="1">
    <location>
        <position position="265"/>
    </location>
    <ligand>
        <name>FMN</name>
        <dbReference type="ChEBI" id="CHEBI:58210"/>
    </ligand>
</feature>
<feature type="binding site" evidence="1">
    <location>
        <position position="294"/>
    </location>
    <ligand>
        <name>FMN</name>
        <dbReference type="ChEBI" id="CHEBI:58210"/>
    </ligand>
</feature>
<feature type="binding site" evidence="1">
    <location>
        <begin position="315"/>
        <end position="316"/>
    </location>
    <ligand>
        <name>FMN</name>
        <dbReference type="ChEBI" id="CHEBI:58210"/>
    </ligand>
</feature>
<dbReference type="EC" id="1.3.5.2" evidence="1"/>
<dbReference type="EMBL" id="AP009179">
    <property type="protein sequence ID" value="BAF71769.1"/>
    <property type="molecule type" value="Genomic_DNA"/>
</dbReference>
<dbReference type="RefSeq" id="WP_011980502.1">
    <property type="nucleotide sequence ID" value="NC_009663.1"/>
</dbReference>
<dbReference type="SMR" id="A6Q8G0"/>
<dbReference type="STRING" id="387093.SUN_0811"/>
<dbReference type="KEGG" id="sun:SUN_0811"/>
<dbReference type="eggNOG" id="COG0167">
    <property type="taxonomic scope" value="Bacteria"/>
</dbReference>
<dbReference type="HOGENOM" id="CLU_013640_2_0_7"/>
<dbReference type="UniPathway" id="UPA00070">
    <property type="reaction ID" value="UER00946"/>
</dbReference>
<dbReference type="Proteomes" id="UP000006378">
    <property type="component" value="Chromosome"/>
</dbReference>
<dbReference type="GO" id="GO:0005737">
    <property type="term" value="C:cytoplasm"/>
    <property type="evidence" value="ECO:0007669"/>
    <property type="project" value="InterPro"/>
</dbReference>
<dbReference type="GO" id="GO:0005886">
    <property type="term" value="C:plasma membrane"/>
    <property type="evidence" value="ECO:0007669"/>
    <property type="project" value="UniProtKB-SubCell"/>
</dbReference>
<dbReference type="GO" id="GO:0106430">
    <property type="term" value="F:dihydroorotate dehydrogenase (quinone) activity"/>
    <property type="evidence" value="ECO:0007669"/>
    <property type="project" value="UniProtKB-EC"/>
</dbReference>
<dbReference type="GO" id="GO:0006207">
    <property type="term" value="P:'de novo' pyrimidine nucleobase biosynthetic process"/>
    <property type="evidence" value="ECO:0007669"/>
    <property type="project" value="InterPro"/>
</dbReference>
<dbReference type="GO" id="GO:0044205">
    <property type="term" value="P:'de novo' UMP biosynthetic process"/>
    <property type="evidence" value="ECO:0007669"/>
    <property type="project" value="UniProtKB-UniRule"/>
</dbReference>
<dbReference type="CDD" id="cd04738">
    <property type="entry name" value="DHOD_2_like"/>
    <property type="match status" value="1"/>
</dbReference>
<dbReference type="Gene3D" id="3.20.20.70">
    <property type="entry name" value="Aldolase class I"/>
    <property type="match status" value="1"/>
</dbReference>
<dbReference type="HAMAP" id="MF_00225">
    <property type="entry name" value="DHO_dh_type2"/>
    <property type="match status" value="1"/>
</dbReference>
<dbReference type="InterPro" id="IPR013785">
    <property type="entry name" value="Aldolase_TIM"/>
</dbReference>
<dbReference type="InterPro" id="IPR050074">
    <property type="entry name" value="DHO_dehydrogenase"/>
</dbReference>
<dbReference type="InterPro" id="IPR012135">
    <property type="entry name" value="Dihydroorotate_DH_1_2"/>
</dbReference>
<dbReference type="InterPro" id="IPR005719">
    <property type="entry name" value="Dihydroorotate_DH_2"/>
</dbReference>
<dbReference type="InterPro" id="IPR005720">
    <property type="entry name" value="Dihydroorotate_DH_cat"/>
</dbReference>
<dbReference type="InterPro" id="IPR001295">
    <property type="entry name" value="Dihydroorotate_DH_CS"/>
</dbReference>
<dbReference type="NCBIfam" id="NF003645">
    <property type="entry name" value="PRK05286.1-2"/>
    <property type="match status" value="1"/>
</dbReference>
<dbReference type="NCBIfam" id="NF003649">
    <property type="entry name" value="PRK05286.2-2"/>
    <property type="match status" value="1"/>
</dbReference>
<dbReference type="NCBIfam" id="NF003652">
    <property type="entry name" value="PRK05286.2-5"/>
    <property type="match status" value="1"/>
</dbReference>
<dbReference type="NCBIfam" id="TIGR01036">
    <property type="entry name" value="pyrD_sub2"/>
    <property type="match status" value="1"/>
</dbReference>
<dbReference type="PANTHER" id="PTHR48109:SF4">
    <property type="entry name" value="DIHYDROOROTATE DEHYDROGENASE (QUINONE), MITOCHONDRIAL"/>
    <property type="match status" value="1"/>
</dbReference>
<dbReference type="PANTHER" id="PTHR48109">
    <property type="entry name" value="DIHYDROOROTATE DEHYDROGENASE (QUINONE), MITOCHONDRIAL-RELATED"/>
    <property type="match status" value="1"/>
</dbReference>
<dbReference type="Pfam" id="PF01180">
    <property type="entry name" value="DHO_dh"/>
    <property type="match status" value="1"/>
</dbReference>
<dbReference type="PIRSF" id="PIRSF000164">
    <property type="entry name" value="DHO_oxidase"/>
    <property type="match status" value="1"/>
</dbReference>
<dbReference type="SUPFAM" id="SSF51395">
    <property type="entry name" value="FMN-linked oxidoreductases"/>
    <property type="match status" value="1"/>
</dbReference>
<dbReference type="PROSITE" id="PS00911">
    <property type="entry name" value="DHODEHASE_1"/>
    <property type="match status" value="1"/>
</dbReference>
<dbReference type="PROSITE" id="PS00912">
    <property type="entry name" value="DHODEHASE_2"/>
    <property type="match status" value="1"/>
</dbReference>
<evidence type="ECO:0000255" key="1">
    <source>
        <dbReference type="HAMAP-Rule" id="MF_00225"/>
    </source>
</evidence>
<protein>
    <recommendedName>
        <fullName evidence="1">Dihydroorotate dehydrogenase (quinone)</fullName>
        <ecNumber evidence="1">1.3.5.2</ecNumber>
    </recommendedName>
    <alternativeName>
        <fullName evidence="1">DHOdehase</fullName>
        <shortName evidence="1">DHOD</shortName>
        <shortName evidence="1">DHODase</shortName>
    </alternativeName>
    <alternativeName>
        <fullName evidence="1">Dihydroorotate oxidase</fullName>
    </alternativeName>
</protein>
<reference key="1">
    <citation type="journal article" date="2007" name="Proc. Natl. Acad. Sci. U.S.A.">
        <title>Deep-sea vent epsilon-proteobacterial genomes provide insights into emergence of pathogens.</title>
        <authorList>
            <person name="Nakagawa S."/>
            <person name="Takaki Y."/>
            <person name="Shimamura S."/>
            <person name="Reysenbach A.-L."/>
            <person name="Takai K."/>
            <person name="Horikoshi K."/>
        </authorList>
    </citation>
    <scope>NUCLEOTIDE SEQUENCE [LARGE SCALE GENOMIC DNA]</scope>
    <source>
        <strain>NBC37-1</strain>
    </source>
</reference>